<gene>
    <name evidence="6" type="primary">MYB3R3</name>
    <name evidence="8" type="ordered locus">At3g09370</name>
    <name evidence="9" type="ORF">F3L24.24</name>
</gene>
<organism>
    <name type="scientific">Arabidopsis thaliana</name>
    <name type="common">Mouse-ear cress</name>
    <dbReference type="NCBI Taxonomy" id="3702"/>
    <lineage>
        <taxon>Eukaryota</taxon>
        <taxon>Viridiplantae</taxon>
        <taxon>Streptophyta</taxon>
        <taxon>Embryophyta</taxon>
        <taxon>Tracheophyta</taxon>
        <taxon>Spermatophyta</taxon>
        <taxon>Magnoliopsida</taxon>
        <taxon>eudicotyledons</taxon>
        <taxon>Gunneridae</taxon>
        <taxon>Pentapetalae</taxon>
        <taxon>rosids</taxon>
        <taxon>malvids</taxon>
        <taxon>Brassicales</taxon>
        <taxon>Brassicaceae</taxon>
        <taxon>Camelineae</taxon>
        <taxon>Arabidopsis</taxon>
    </lineage>
</organism>
<protein>
    <recommendedName>
        <fullName evidence="6">Transcription factor MYB3R-3</fullName>
    </recommendedName>
    <alternativeName>
        <fullName evidence="6">Myb-related protein 3R-3</fullName>
    </alternativeName>
</protein>
<accession>Q8H1P9</accession>
<accession>F4IZX3</accession>
<accession>Q94CC4</accession>
<accession>Q9M652</accession>
<accession>Q9SR26</accession>
<reference key="1">
    <citation type="submission" date="2004-01" db="EMBL/GenBank/DDBJ databases">
        <title>The MYB transcription factor family in Arabidopsis: A genome-wide cloning and expression pattern analysis.</title>
        <authorList>
            <person name="Qu L."/>
            <person name="Gu H."/>
        </authorList>
    </citation>
    <scope>NUCLEOTIDE SEQUENCE [MRNA] (ISOFORM 1)</scope>
</reference>
<reference key="2">
    <citation type="journal article" date="2001" name="Curr. Opin. Plant Biol.">
        <title>The R2R3-MYB gene family in Arabidopsis thaliana.</title>
        <authorList>
            <person name="Stracke R."/>
            <person name="Werber M."/>
            <person name="Weisshaar B."/>
        </authorList>
    </citation>
    <scope>NUCLEOTIDE SEQUENCE [MRNA] (ISOFORM 1)</scope>
    <scope>GENE FAMILY</scope>
    <scope>NOMENCLATURE</scope>
    <source>
        <strain>cv. Columbia</strain>
    </source>
</reference>
<reference key="3">
    <citation type="journal article" date="2000" name="Nature">
        <title>Sequence and analysis of chromosome 3 of the plant Arabidopsis thaliana.</title>
        <authorList>
            <person name="Salanoubat M."/>
            <person name="Lemcke K."/>
            <person name="Rieger M."/>
            <person name="Ansorge W."/>
            <person name="Unseld M."/>
            <person name="Fartmann B."/>
            <person name="Valle G."/>
            <person name="Bloecker H."/>
            <person name="Perez-Alonso M."/>
            <person name="Obermaier B."/>
            <person name="Delseny M."/>
            <person name="Boutry M."/>
            <person name="Grivell L.A."/>
            <person name="Mache R."/>
            <person name="Puigdomenech P."/>
            <person name="De Simone V."/>
            <person name="Choisne N."/>
            <person name="Artiguenave F."/>
            <person name="Robert C."/>
            <person name="Brottier P."/>
            <person name="Wincker P."/>
            <person name="Cattolico L."/>
            <person name="Weissenbach J."/>
            <person name="Saurin W."/>
            <person name="Quetier F."/>
            <person name="Schaefer M."/>
            <person name="Mueller-Auer S."/>
            <person name="Gabel C."/>
            <person name="Fuchs M."/>
            <person name="Benes V."/>
            <person name="Wurmbach E."/>
            <person name="Drzonek H."/>
            <person name="Erfle H."/>
            <person name="Jordan N."/>
            <person name="Bangert S."/>
            <person name="Wiedelmann R."/>
            <person name="Kranz H."/>
            <person name="Voss H."/>
            <person name="Holland R."/>
            <person name="Brandt P."/>
            <person name="Nyakatura G."/>
            <person name="Vezzi A."/>
            <person name="D'Angelo M."/>
            <person name="Pallavicini A."/>
            <person name="Toppo S."/>
            <person name="Simionati B."/>
            <person name="Conrad A."/>
            <person name="Hornischer K."/>
            <person name="Kauer G."/>
            <person name="Loehnert T.-H."/>
            <person name="Nordsiek G."/>
            <person name="Reichelt J."/>
            <person name="Scharfe M."/>
            <person name="Schoen O."/>
            <person name="Bargues M."/>
            <person name="Terol J."/>
            <person name="Climent J."/>
            <person name="Navarro P."/>
            <person name="Collado C."/>
            <person name="Perez-Perez A."/>
            <person name="Ottenwaelder B."/>
            <person name="Duchemin D."/>
            <person name="Cooke R."/>
            <person name="Laudie M."/>
            <person name="Berger-Llauro C."/>
            <person name="Purnelle B."/>
            <person name="Masuy D."/>
            <person name="de Haan M."/>
            <person name="Maarse A.C."/>
            <person name="Alcaraz J.-P."/>
            <person name="Cottet A."/>
            <person name="Casacuberta E."/>
            <person name="Monfort A."/>
            <person name="Argiriou A."/>
            <person name="Flores M."/>
            <person name="Liguori R."/>
            <person name="Vitale D."/>
            <person name="Mannhaupt G."/>
            <person name="Haase D."/>
            <person name="Schoof H."/>
            <person name="Rudd S."/>
            <person name="Zaccaria P."/>
            <person name="Mewes H.-W."/>
            <person name="Mayer K.F.X."/>
            <person name="Kaul S."/>
            <person name="Town C.D."/>
            <person name="Koo H.L."/>
            <person name="Tallon L.J."/>
            <person name="Jenkins J."/>
            <person name="Rooney T."/>
            <person name="Rizzo M."/>
            <person name="Walts A."/>
            <person name="Utterback T."/>
            <person name="Fujii C.Y."/>
            <person name="Shea T.P."/>
            <person name="Creasy T.H."/>
            <person name="Haas B."/>
            <person name="Maiti R."/>
            <person name="Wu D."/>
            <person name="Peterson J."/>
            <person name="Van Aken S."/>
            <person name="Pai G."/>
            <person name="Militscher J."/>
            <person name="Sellers P."/>
            <person name="Gill J.E."/>
            <person name="Feldblyum T.V."/>
            <person name="Preuss D."/>
            <person name="Lin X."/>
            <person name="Nierman W.C."/>
            <person name="Salzberg S.L."/>
            <person name="White O."/>
            <person name="Venter J.C."/>
            <person name="Fraser C.M."/>
            <person name="Kaneko T."/>
            <person name="Nakamura Y."/>
            <person name="Sato S."/>
            <person name="Kato T."/>
            <person name="Asamizu E."/>
            <person name="Sasamoto S."/>
            <person name="Kimura T."/>
            <person name="Idesawa K."/>
            <person name="Kawashima K."/>
            <person name="Kishida Y."/>
            <person name="Kiyokawa C."/>
            <person name="Kohara M."/>
            <person name="Matsumoto M."/>
            <person name="Matsuno A."/>
            <person name="Muraki A."/>
            <person name="Nakayama S."/>
            <person name="Nakazaki N."/>
            <person name="Shinpo S."/>
            <person name="Takeuchi C."/>
            <person name="Wada T."/>
            <person name="Watanabe A."/>
            <person name="Yamada M."/>
            <person name="Yasuda M."/>
            <person name="Tabata S."/>
        </authorList>
    </citation>
    <scope>NUCLEOTIDE SEQUENCE [LARGE SCALE GENOMIC DNA]</scope>
    <source>
        <strain>cv. Columbia</strain>
    </source>
</reference>
<reference key="4">
    <citation type="journal article" date="2017" name="Plant J.">
        <title>Araport11: a complete reannotation of the Arabidopsis thaliana reference genome.</title>
        <authorList>
            <person name="Cheng C.Y."/>
            <person name="Krishnakumar V."/>
            <person name="Chan A.P."/>
            <person name="Thibaud-Nissen F."/>
            <person name="Schobel S."/>
            <person name="Town C.D."/>
        </authorList>
    </citation>
    <scope>GENOME REANNOTATION</scope>
    <source>
        <strain>cv. Columbia</strain>
    </source>
</reference>
<reference key="5">
    <citation type="journal article" date="2003" name="Science">
        <title>Empirical analysis of transcriptional activity in the Arabidopsis genome.</title>
        <authorList>
            <person name="Yamada K."/>
            <person name="Lim J."/>
            <person name="Dale J.M."/>
            <person name="Chen H."/>
            <person name="Shinn P."/>
            <person name="Palm C.J."/>
            <person name="Southwick A.M."/>
            <person name="Wu H.C."/>
            <person name="Kim C.J."/>
            <person name="Nguyen M."/>
            <person name="Pham P.K."/>
            <person name="Cheuk R.F."/>
            <person name="Karlin-Newmann G."/>
            <person name="Liu S.X."/>
            <person name="Lam B."/>
            <person name="Sakano H."/>
            <person name="Wu T."/>
            <person name="Yu G."/>
            <person name="Miranda M."/>
            <person name="Quach H.L."/>
            <person name="Tripp M."/>
            <person name="Chang C.H."/>
            <person name="Lee J.M."/>
            <person name="Toriumi M.J."/>
            <person name="Chan M.M."/>
            <person name="Tang C.C."/>
            <person name="Onodera C.S."/>
            <person name="Deng J.M."/>
            <person name="Akiyama K."/>
            <person name="Ansari Y."/>
            <person name="Arakawa T."/>
            <person name="Banh J."/>
            <person name="Banno F."/>
            <person name="Bowser L."/>
            <person name="Brooks S.Y."/>
            <person name="Carninci P."/>
            <person name="Chao Q."/>
            <person name="Choy N."/>
            <person name="Enju A."/>
            <person name="Goldsmith A.D."/>
            <person name="Gurjal M."/>
            <person name="Hansen N.F."/>
            <person name="Hayashizaki Y."/>
            <person name="Johnson-Hopson C."/>
            <person name="Hsuan V.W."/>
            <person name="Iida K."/>
            <person name="Karnes M."/>
            <person name="Khan S."/>
            <person name="Koesema E."/>
            <person name="Ishida J."/>
            <person name="Jiang P.X."/>
            <person name="Jones T."/>
            <person name="Kawai J."/>
            <person name="Kamiya A."/>
            <person name="Meyers C."/>
            <person name="Nakajima M."/>
            <person name="Narusaka M."/>
            <person name="Seki M."/>
            <person name="Sakurai T."/>
            <person name="Satou M."/>
            <person name="Tamse R."/>
            <person name="Vaysberg M."/>
            <person name="Wallender E.K."/>
            <person name="Wong C."/>
            <person name="Yamamura Y."/>
            <person name="Yuan S."/>
            <person name="Shinozaki K."/>
            <person name="Davis R.W."/>
            <person name="Theologis A."/>
            <person name="Ecker J.R."/>
        </authorList>
    </citation>
    <scope>NUCLEOTIDE SEQUENCE [LARGE SCALE MRNA] (ISOFORM 1)</scope>
    <source>
        <strain>cv. Columbia</strain>
    </source>
</reference>
<reference key="6">
    <citation type="journal article" date="2006" name="Plant Mol. Biol.">
        <title>The MYB transcription factor superfamily of Arabidopsis: expression analysis and phylogenetic comparison with the rice MYB family.</title>
        <authorList>
            <person name="Chen Y."/>
            <person name="Yang X."/>
            <person name="He K."/>
            <person name="Liu M."/>
            <person name="Li J."/>
            <person name="Gao Z."/>
            <person name="Lin Z."/>
            <person name="Zhang Y."/>
            <person name="Wang X."/>
            <person name="Qiu X."/>
            <person name="Shen Y."/>
            <person name="Zhang L."/>
            <person name="Deng X."/>
            <person name="Luo J."/>
            <person name="Deng X.-W."/>
            <person name="Chen Z."/>
            <person name="Gu H."/>
            <person name="Qu L.-J."/>
        </authorList>
    </citation>
    <scope>INDUCTION BY ETHYLENE; AUXIN; JASMONIC ACID AND SALICYLIC ACID</scope>
    <scope>GENE FAMILY</scope>
</reference>
<reference key="7">
    <citation type="journal article" date="2007" name="Development">
        <title>R1R2R3-Myb proteins positively regulate cytokinesis through activation of KNOLLE transcription in Arabidopsis thaliana.</title>
        <authorList>
            <person name="Haga N."/>
            <person name="Kato K."/>
            <person name="Murase M."/>
            <person name="Araki S."/>
            <person name="Kubo M."/>
            <person name="Demura T."/>
            <person name="Suzuki K."/>
            <person name="Mueller I."/>
            <person name="Voss U."/>
            <person name="Juergens G."/>
            <person name="Ito M."/>
        </authorList>
    </citation>
    <scope>GENE FAMILY</scope>
    <source>
        <strain>cv. Columbia</strain>
    </source>
</reference>
<reference key="8">
    <citation type="journal article" date="2015" name="EMBO J.">
        <title>Transcriptional repression by MYB3R proteins regulates plant organ growth.</title>
        <authorList>
            <person name="Kobayashi K."/>
            <person name="Suzuki T."/>
            <person name="Iwata E."/>
            <person name="Nakamichi N."/>
            <person name="Suzuki T."/>
            <person name="Chen P."/>
            <person name="Ohtani M."/>
            <person name="Ishida T."/>
            <person name="Hosoya H."/>
            <person name="Mueller S."/>
            <person name="Leviczky T."/>
            <person name="Pettko-Szandtner A."/>
            <person name="Darula Z."/>
            <person name="Iwamoto A."/>
            <person name="Nomoto M."/>
            <person name="Tada Y."/>
            <person name="Higashiyama T."/>
            <person name="Demura T."/>
            <person name="Doonan J.H."/>
            <person name="Hauser M.T."/>
            <person name="Sugimoto K."/>
            <person name="Umeda M."/>
            <person name="Magyar Z."/>
            <person name="Boegre L."/>
            <person name="Ito M."/>
        </authorList>
    </citation>
    <scope>FUNCTION</scope>
    <scope>DISRUPTION PHENOTYPE</scope>
    <scope>INTERACTION WITH CDKA-1; RBR1 AND E2FC</scope>
    <scope>DEVELOPMENTAL STAGE</scope>
    <source>
        <strain>cv. Columbia</strain>
    </source>
</reference>
<comment type="function">
    <text evidence="1 5">Transcription factor that binds 5'-AACGG-3' motifs in gene promoters (By similarity). Transcription repressor that regulates organ growth. Binds to the promoters of G2/M-specific genes and to E2F target genes to prevent their expression in post-mitotic cells and to restrict the time window of their expression in proliferating cells (PubMed:26069325).</text>
</comment>
<comment type="subunit">
    <text evidence="5">Component of a DREAM-like complex which modulates a variety of developmentally regulated genes and of the mitotic genes in proliferating and differentiated cells. Associates with RBR1 in both earlier and later stages of leaves development. Interacts with CDKA-1 and E2FC, but not with E2FB, at later stages of leaves development.</text>
</comment>
<comment type="interaction">
    <interactant intactId="EBI-4448936">
        <id>Q8H1P9</id>
    </interactant>
    <interactant intactId="EBI-4428219">
        <id>P0DO23</id>
        <label>CP2</label>
    </interactant>
    <organismsDiffer>false</organismsDiffer>
    <experiments>3</experiments>
</comment>
<comment type="subcellular location">
    <subcellularLocation>
        <location evidence="2">Nucleus</location>
    </subcellularLocation>
</comment>
<comment type="alternative products">
    <event type="alternative splicing"/>
    <isoform>
        <id>Q8H1P9-1</id>
        <name>1</name>
        <sequence type="displayed"/>
    </isoform>
    <isoform>
        <id>Q8H1P9-2</id>
        <name>2</name>
        <sequence type="described" ref="VSP_058759"/>
    </isoform>
</comment>
<comment type="developmental stage">
    <text evidence="5">Expressed both in proliferating and maturing stages of leaves.</text>
</comment>
<comment type="induction">
    <text evidence="4">Slightly induced by ethylene, auxin (IAA), jasmonic acid (JA) and salicylic acid (SA).</text>
</comment>
<comment type="disruption phenotype">
    <text evidence="5">In double mutant myb3r3 myb3r5 and triple mutant myb3r1 myb3r3 myb3r5, up-regulation of many G2/M-specific genes leading to larger seeds, organs and embryos due to overproliferation and ectopic cell divisions.</text>
</comment>
<comment type="sequence caution" evidence="7">
    <conflict type="erroneous gene model prediction">
        <sequence resource="EMBL-CDS" id="AAF14045"/>
    </conflict>
</comment>
<dbReference type="EMBL" id="AY519651">
    <property type="protein sequence ID" value="AAS10121.1"/>
    <property type="molecule type" value="mRNA"/>
</dbReference>
<dbReference type="EMBL" id="AF214117">
    <property type="protein sequence ID" value="AAF25950.2"/>
    <property type="molecule type" value="mRNA"/>
</dbReference>
<dbReference type="EMBL" id="AC011436">
    <property type="protein sequence ID" value="AAF14045.1"/>
    <property type="status" value="ALT_SEQ"/>
    <property type="molecule type" value="Genomic_DNA"/>
</dbReference>
<dbReference type="EMBL" id="CP002686">
    <property type="protein sequence ID" value="AEE74757.1"/>
    <property type="molecule type" value="Genomic_DNA"/>
</dbReference>
<dbReference type="EMBL" id="CP002686">
    <property type="protein sequence ID" value="AEE74758.1"/>
    <property type="molecule type" value="Genomic_DNA"/>
</dbReference>
<dbReference type="EMBL" id="AY034964">
    <property type="protein sequence ID" value="AAK59470.1"/>
    <property type="molecule type" value="mRNA"/>
</dbReference>
<dbReference type="EMBL" id="AY142649">
    <property type="protein sequence ID" value="AAN13107.1"/>
    <property type="molecule type" value="mRNA"/>
</dbReference>
<dbReference type="RefSeq" id="NP_001078127.1">
    <molecule id="Q8H1P9-2"/>
    <property type="nucleotide sequence ID" value="NM_001084658.2"/>
</dbReference>
<dbReference type="RefSeq" id="NP_566350.1">
    <molecule id="Q8H1P9-1"/>
    <property type="nucleotide sequence ID" value="NM_111771.4"/>
</dbReference>
<dbReference type="SMR" id="Q8H1P9"/>
<dbReference type="FunCoup" id="Q8H1P9">
    <property type="interactions" value="616"/>
</dbReference>
<dbReference type="IntAct" id="Q8H1P9">
    <property type="interactions" value="8"/>
</dbReference>
<dbReference type="STRING" id="3702.Q8H1P9"/>
<dbReference type="iPTMnet" id="Q8H1P9"/>
<dbReference type="PaxDb" id="3702-AT3G09370.2"/>
<dbReference type="ProteomicsDB" id="250925">
    <molecule id="Q8H1P9-1"/>
</dbReference>
<dbReference type="EnsemblPlants" id="AT3G09370.1">
    <molecule id="Q8H1P9-1"/>
    <property type="protein sequence ID" value="AT3G09370.1"/>
    <property type="gene ID" value="AT3G09370"/>
</dbReference>
<dbReference type="EnsemblPlants" id="AT3G09370.2">
    <molecule id="Q8H1P9-2"/>
    <property type="protein sequence ID" value="AT3G09370.2"/>
    <property type="gene ID" value="AT3G09370"/>
</dbReference>
<dbReference type="Gramene" id="AT3G09370.1">
    <molecule id="Q8H1P9-1"/>
    <property type="protein sequence ID" value="AT3G09370.1"/>
    <property type="gene ID" value="AT3G09370"/>
</dbReference>
<dbReference type="Gramene" id="AT3G09370.2">
    <molecule id="Q8H1P9-2"/>
    <property type="protein sequence ID" value="AT3G09370.2"/>
    <property type="gene ID" value="AT3G09370"/>
</dbReference>
<dbReference type="KEGG" id="ath:AT3G09370"/>
<dbReference type="Araport" id="AT3G09370"/>
<dbReference type="TAIR" id="AT3G09370">
    <property type="gene designation" value="MYB3R-3"/>
</dbReference>
<dbReference type="eggNOG" id="KOG0048">
    <property type="taxonomic scope" value="Eukaryota"/>
</dbReference>
<dbReference type="HOGENOM" id="CLU_016150_3_1_1"/>
<dbReference type="InParanoid" id="Q8H1P9"/>
<dbReference type="OMA" id="RAVCTYN"/>
<dbReference type="PhylomeDB" id="Q8H1P9"/>
<dbReference type="PRO" id="PR:Q8H1P9"/>
<dbReference type="Proteomes" id="UP000006548">
    <property type="component" value="Chromosome 3"/>
</dbReference>
<dbReference type="ExpressionAtlas" id="Q8H1P9">
    <property type="expression patterns" value="baseline and differential"/>
</dbReference>
<dbReference type="GO" id="GO:0070176">
    <property type="term" value="C:DRM complex"/>
    <property type="evidence" value="ECO:0000314"/>
    <property type="project" value="TAIR"/>
</dbReference>
<dbReference type="GO" id="GO:0003700">
    <property type="term" value="F:DNA-binding transcription factor activity"/>
    <property type="evidence" value="ECO:0000250"/>
    <property type="project" value="TAIR"/>
</dbReference>
<dbReference type="GO" id="GO:0043565">
    <property type="term" value="F:sequence-specific DNA binding"/>
    <property type="evidence" value="ECO:0000250"/>
    <property type="project" value="UniProtKB"/>
</dbReference>
<dbReference type="GO" id="GO:0000976">
    <property type="term" value="F:transcription cis-regulatory region binding"/>
    <property type="evidence" value="ECO:0000353"/>
    <property type="project" value="TAIR"/>
</dbReference>
<dbReference type="GO" id="GO:0006974">
    <property type="term" value="P:DNA damage response"/>
    <property type="evidence" value="ECO:0000315"/>
    <property type="project" value="TAIR"/>
</dbReference>
<dbReference type="GO" id="GO:0008285">
    <property type="term" value="P:negative regulation of cell population proliferation"/>
    <property type="evidence" value="ECO:0000315"/>
    <property type="project" value="UniProtKB"/>
</dbReference>
<dbReference type="GO" id="GO:0045892">
    <property type="term" value="P:negative regulation of DNA-templated transcription"/>
    <property type="evidence" value="ECO:0000315"/>
    <property type="project" value="UniProtKB"/>
</dbReference>
<dbReference type="GO" id="GO:0009733">
    <property type="term" value="P:response to auxin"/>
    <property type="evidence" value="ECO:0000270"/>
    <property type="project" value="UniProtKB"/>
</dbReference>
<dbReference type="GO" id="GO:0009723">
    <property type="term" value="P:response to ethylene"/>
    <property type="evidence" value="ECO:0000270"/>
    <property type="project" value="UniProtKB"/>
</dbReference>
<dbReference type="GO" id="GO:0009753">
    <property type="term" value="P:response to jasmonic acid"/>
    <property type="evidence" value="ECO:0000270"/>
    <property type="project" value="UniProtKB"/>
</dbReference>
<dbReference type="GO" id="GO:0009751">
    <property type="term" value="P:response to salicylic acid"/>
    <property type="evidence" value="ECO:0000270"/>
    <property type="project" value="UniProtKB"/>
</dbReference>
<dbReference type="CDD" id="cd00167">
    <property type="entry name" value="SANT"/>
    <property type="match status" value="3"/>
</dbReference>
<dbReference type="FunFam" id="1.10.10.60:FF:000324">
    <property type="entry name" value="Transcription factor MYB3R-2"/>
    <property type="match status" value="1"/>
</dbReference>
<dbReference type="FunFam" id="1.10.10.60:FF:000010">
    <property type="entry name" value="Transcriptional activator Myb isoform A"/>
    <property type="match status" value="1"/>
</dbReference>
<dbReference type="FunFam" id="1.10.10.60:FF:000016">
    <property type="entry name" value="Transcriptional activator Myb isoform A"/>
    <property type="match status" value="1"/>
</dbReference>
<dbReference type="Gene3D" id="1.10.10.60">
    <property type="entry name" value="Homeodomain-like"/>
    <property type="match status" value="3"/>
</dbReference>
<dbReference type="InterPro" id="IPR009057">
    <property type="entry name" value="Homeodomain-like_sf"/>
</dbReference>
<dbReference type="InterPro" id="IPR017930">
    <property type="entry name" value="Myb_dom"/>
</dbReference>
<dbReference type="InterPro" id="IPR050560">
    <property type="entry name" value="MYB_TF"/>
</dbReference>
<dbReference type="InterPro" id="IPR001005">
    <property type="entry name" value="SANT/Myb"/>
</dbReference>
<dbReference type="PANTHER" id="PTHR45614">
    <property type="entry name" value="MYB PROTEIN-RELATED"/>
    <property type="match status" value="1"/>
</dbReference>
<dbReference type="Pfam" id="PF13921">
    <property type="entry name" value="Myb_DNA-bind_6"/>
    <property type="match status" value="1"/>
</dbReference>
<dbReference type="Pfam" id="PF00249">
    <property type="entry name" value="Myb_DNA-binding"/>
    <property type="match status" value="1"/>
</dbReference>
<dbReference type="SMART" id="SM00717">
    <property type="entry name" value="SANT"/>
    <property type="match status" value="3"/>
</dbReference>
<dbReference type="SUPFAM" id="SSF46689">
    <property type="entry name" value="Homeodomain-like"/>
    <property type="match status" value="2"/>
</dbReference>
<dbReference type="PROSITE" id="PS51294">
    <property type="entry name" value="HTH_MYB"/>
    <property type="match status" value="3"/>
</dbReference>
<feature type="chain" id="PRO_0000438893" description="Transcription factor MYB3R-3">
    <location>
        <begin position="1"/>
        <end position="505"/>
    </location>
</feature>
<feature type="domain" description="HTH myb-type 1" evidence="2">
    <location>
        <begin position="73"/>
        <end position="124"/>
    </location>
</feature>
<feature type="domain" description="HTH myb-type 2" evidence="2">
    <location>
        <begin position="125"/>
        <end position="180"/>
    </location>
</feature>
<feature type="domain" description="HTH myb-type 3" evidence="2">
    <location>
        <begin position="181"/>
        <end position="231"/>
    </location>
</feature>
<feature type="DNA-binding region" description="H-T-H motif" evidence="2">
    <location>
        <begin position="101"/>
        <end position="124"/>
    </location>
</feature>
<feature type="DNA-binding region" description="H-T-H motif" evidence="2">
    <location>
        <begin position="153"/>
        <end position="176"/>
    </location>
</feature>
<feature type="DNA-binding region" description="H-T-H motif" evidence="2">
    <location>
        <begin position="204"/>
        <end position="227"/>
    </location>
</feature>
<feature type="region of interest" description="Disordered" evidence="3">
    <location>
        <begin position="1"/>
        <end position="83"/>
    </location>
</feature>
<feature type="region of interest" description="Disordered" evidence="3">
    <location>
        <begin position="239"/>
        <end position="261"/>
    </location>
</feature>
<feature type="region of interest" description="Disordered" evidence="3">
    <location>
        <begin position="380"/>
        <end position="458"/>
    </location>
</feature>
<feature type="region of interest" description="Disordered" evidence="3">
    <location>
        <begin position="474"/>
        <end position="505"/>
    </location>
</feature>
<feature type="compositionally biased region" description="Low complexity" evidence="3">
    <location>
        <begin position="36"/>
        <end position="51"/>
    </location>
</feature>
<feature type="compositionally biased region" description="Polar residues" evidence="3">
    <location>
        <begin position="53"/>
        <end position="62"/>
    </location>
</feature>
<feature type="compositionally biased region" description="Polar residues" evidence="3">
    <location>
        <begin position="380"/>
        <end position="389"/>
    </location>
</feature>
<feature type="compositionally biased region" description="Basic and acidic residues" evidence="3">
    <location>
        <begin position="422"/>
        <end position="443"/>
    </location>
</feature>
<feature type="compositionally biased region" description="Polar residues" evidence="3">
    <location>
        <begin position="444"/>
        <end position="454"/>
    </location>
</feature>
<feature type="compositionally biased region" description="Basic and acidic residues" evidence="3">
    <location>
        <begin position="477"/>
        <end position="496"/>
    </location>
</feature>
<feature type="splice variant" id="VSP_058759" description="In isoform 2.">
    <original>E</original>
    <variation>EMMDLQ</variation>
    <location>
        <position position="14"/>
    </location>
</feature>
<feature type="sequence conflict" description="In Ref. 2; AAF25950." evidence="7" ref="2">
    <original>E</original>
    <variation>G</variation>
    <location>
        <position position="16"/>
    </location>
</feature>
<feature type="sequence conflict" description="In Ref. 5; AAK59470." evidence="7" ref="5">
    <original>W</original>
    <variation>R</variation>
    <location>
        <position position="223"/>
    </location>
</feature>
<sequence length="505" mass="56119">MSSTFNPAASSPDEEETGEVKIEDQCVENKQSTPASCSSVSEGSAGSSHKSPTIASPATVSPTHRYLGRTSGPIRRAKGGWTPEEDETLRQAVDTFKGKSWKNIAKSFPDRTEVQCLHRWQKVLNPDLIKGPWTHEEDEKIVELVEKYGPAKWSIIAQSLPGRIGKQCRERWHNHLNPDINKDAWTTEEEVALMNAHRSHGNKWAEIAKVLPGRTDNAIKNHWNSSLKKKSEFYLLTGRLPPPTTTRNGVPDSVTKRSSSAQKRVFGSVAQTSSVTTDVNNLAEDGNGQINSSVPVEEVVAASRMTSLNEYARSPQLPNPEPLPENGGAANNGYHLYYTPQIDYYRASEVDTQRMYGNECGCSPSASPVSFFTPPPCRNVHSNGSTPRSPESYLREAGRTYPNTPSIFRKRRPRVVVQDNNNAKKTDEAKEVDQKVNDGKDSSEIQNNGSNAYNLSPPYRIRSKRTAVFKSRQLEFISREEEKADDETKSSEKDMLIDGDSQLLG</sequence>
<evidence type="ECO:0000250" key="1">
    <source>
        <dbReference type="UniProtKB" id="Q94FL9"/>
    </source>
</evidence>
<evidence type="ECO:0000255" key="2">
    <source>
        <dbReference type="PROSITE-ProRule" id="PRU00625"/>
    </source>
</evidence>
<evidence type="ECO:0000256" key="3">
    <source>
        <dbReference type="SAM" id="MobiDB-lite"/>
    </source>
</evidence>
<evidence type="ECO:0000269" key="4">
    <source>
    </source>
</evidence>
<evidence type="ECO:0000269" key="5">
    <source>
    </source>
</evidence>
<evidence type="ECO:0000303" key="6">
    <source>
    </source>
</evidence>
<evidence type="ECO:0000305" key="7"/>
<evidence type="ECO:0000312" key="8">
    <source>
        <dbReference type="Araport" id="AT3G09370"/>
    </source>
</evidence>
<evidence type="ECO:0000312" key="9">
    <source>
        <dbReference type="EMBL" id="AAF14045.1"/>
    </source>
</evidence>
<keyword id="KW-0025">Alternative splicing</keyword>
<keyword id="KW-0238">DNA-binding</keyword>
<keyword id="KW-0539">Nucleus</keyword>
<keyword id="KW-1185">Reference proteome</keyword>
<keyword id="KW-0677">Repeat</keyword>
<keyword id="KW-0678">Repressor</keyword>
<keyword id="KW-0804">Transcription</keyword>
<keyword id="KW-0805">Transcription regulation</keyword>
<proteinExistence type="evidence at protein level"/>
<name>MB3R3_ARATH</name>